<sequence>MYAYFRGELISSSRDNAIVDVGGVAYRLLISNSTYRQLPSSGDQVKLLAHLHVKEDLMQLYGFIEEEERQLFLLLLSISGVGPKLALAILSGLPVEEIQEAIMANKPETLFGISGVGKKTAARIILELRDRILKLQQTRPGKTAGAGSVASLSEDALQALMTLGFSRASAQQAVTRALLSAENPGVEDIVREALQNIRNH</sequence>
<protein>
    <recommendedName>
        <fullName evidence="1">Holliday junction branch migration complex subunit RuvA</fullName>
    </recommendedName>
</protein>
<comment type="function">
    <text evidence="1">The RuvA-RuvB-RuvC complex processes Holliday junction (HJ) DNA during genetic recombination and DNA repair, while the RuvA-RuvB complex plays an important role in the rescue of blocked DNA replication forks via replication fork reversal (RFR). RuvA specifically binds to HJ cruciform DNA, conferring on it an open structure. The RuvB hexamer acts as an ATP-dependent pump, pulling dsDNA into and through the RuvAB complex. HJ branch migration allows RuvC to scan DNA until it finds its consensus sequence, where it cleaves and resolves the cruciform DNA.</text>
</comment>
<comment type="subunit">
    <text evidence="1">Homotetramer. Forms an RuvA(8)-RuvB(12)-Holliday junction (HJ) complex. HJ DNA is sandwiched between 2 RuvA tetramers; dsDNA enters through RuvA and exits via RuvB. An RuvB hexamer assembles on each DNA strand where it exits the tetramer. Each RuvB hexamer is contacted by two RuvA subunits (via domain III) on 2 adjacent RuvB subunits; this complex drives branch migration. In the full resolvosome a probable DNA-RuvA(4)-RuvB(12)-RuvC(2) complex forms which resolves the HJ.</text>
</comment>
<comment type="subcellular location">
    <subcellularLocation>
        <location evidence="1">Cytoplasm</location>
    </subcellularLocation>
</comment>
<comment type="domain">
    <text evidence="1">Has three domains with a flexible linker between the domains II and III and assumes an 'L' shape. Domain III is highly mobile and contacts RuvB.</text>
</comment>
<comment type="similarity">
    <text evidence="1">Belongs to the RuvA family.</text>
</comment>
<evidence type="ECO:0000255" key="1">
    <source>
        <dbReference type="HAMAP-Rule" id="MF_00031"/>
    </source>
</evidence>
<name>RUVA_PROA2</name>
<organism>
    <name type="scientific">Prosthecochloris aestuarii (strain DSM 271 / SK 413)</name>
    <dbReference type="NCBI Taxonomy" id="290512"/>
    <lineage>
        <taxon>Bacteria</taxon>
        <taxon>Pseudomonadati</taxon>
        <taxon>Chlorobiota</taxon>
        <taxon>Chlorobiia</taxon>
        <taxon>Chlorobiales</taxon>
        <taxon>Chlorobiaceae</taxon>
        <taxon>Prosthecochloris</taxon>
    </lineage>
</organism>
<dbReference type="EMBL" id="CP001108">
    <property type="protein sequence ID" value="ACF45446.1"/>
    <property type="molecule type" value="Genomic_DNA"/>
</dbReference>
<dbReference type="RefSeq" id="WP_012504983.1">
    <property type="nucleotide sequence ID" value="NC_011059.1"/>
</dbReference>
<dbReference type="SMR" id="B4S4U8"/>
<dbReference type="STRING" id="290512.Paes_0389"/>
<dbReference type="KEGG" id="paa:Paes_0389"/>
<dbReference type="eggNOG" id="COG0632">
    <property type="taxonomic scope" value="Bacteria"/>
</dbReference>
<dbReference type="HOGENOM" id="CLU_087936_3_0_10"/>
<dbReference type="Proteomes" id="UP000002725">
    <property type="component" value="Chromosome"/>
</dbReference>
<dbReference type="GO" id="GO:0005737">
    <property type="term" value="C:cytoplasm"/>
    <property type="evidence" value="ECO:0007669"/>
    <property type="project" value="UniProtKB-SubCell"/>
</dbReference>
<dbReference type="GO" id="GO:0009379">
    <property type="term" value="C:Holliday junction helicase complex"/>
    <property type="evidence" value="ECO:0007669"/>
    <property type="project" value="InterPro"/>
</dbReference>
<dbReference type="GO" id="GO:0048476">
    <property type="term" value="C:Holliday junction resolvase complex"/>
    <property type="evidence" value="ECO:0007669"/>
    <property type="project" value="UniProtKB-UniRule"/>
</dbReference>
<dbReference type="GO" id="GO:0005524">
    <property type="term" value="F:ATP binding"/>
    <property type="evidence" value="ECO:0007669"/>
    <property type="project" value="InterPro"/>
</dbReference>
<dbReference type="GO" id="GO:0000400">
    <property type="term" value="F:four-way junction DNA binding"/>
    <property type="evidence" value="ECO:0007669"/>
    <property type="project" value="UniProtKB-UniRule"/>
</dbReference>
<dbReference type="GO" id="GO:0009378">
    <property type="term" value="F:four-way junction helicase activity"/>
    <property type="evidence" value="ECO:0007669"/>
    <property type="project" value="InterPro"/>
</dbReference>
<dbReference type="GO" id="GO:0006310">
    <property type="term" value="P:DNA recombination"/>
    <property type="evidence" value="ECO:0007669"/>
    <property type="project" value="UniProtKB-UniRule"/>
</dbReference>
<dbReference type="GO" id="GO:0006281">
    <property type="term" value="P:DNA repair"/>
    <property type="evidence" value="ECO:0007669"/>
    <property type="project" value="UniProtKB-UniRule"/>
</dbReference>
<dbReference type="CDD" id="cd14332">
    <property type="entry name" value="UBA_RuvA_C"/>
    <property type="match status" value="1"/>
</dbReference>
<dbReference type="Gene3D" id="1.10.150.20">
    <property type="entry name" value="5' to 3' exonuclease, C-terminal subdomain"/>
    <property type="match status" value="1"/>
</dbReference>
<dbReference type="Gene3D" id="1.10.8.10">
    <property type="entry name" value="DNA helicase RuvA subunit, C-terminal domain"/>
    <property type="match status" value="1"/>
</dbReference>
<dbReference type="Gene3D" id="2.40.50.140">
    <property type="entry name" value="Nucleic acid-binding proteins"/>
    <property type="match status" value="1"/>
</dbReference>
<dbReference type="HAMAP" id="MF_00031">
    <property type="entry name" value="DNA_HJ_migration_RuvA"/>
    <property type="match status" value="1"/>
</dbReference>
<dbReference type="InterPro" id="IPR013849">
    <property type="entry name" value="DNA_helicase_Holl-junc_RuvA_I"/>
</dbReference>
<dbReference type="InterPro" id="IPR003583">
    <property type="entry name" value="Hlx-hairpin-Hlx_DNA-bd_motif"/>
</dbReference>
<dbReference type="InterPro" id="IPR012340">
    <property type="entry name" value="NA-bd_OB-fold"/>
</dbReference>
<dbReference type="InterPro" id="IPR000085">
    <property type="entry name" value="RuvA"/>
</dbReference>
<dbReference type="InterPro" id="IPR010994">
    <property type="entry name" value="RuvA_2-like"/>
</dbReference>
<dbReference type="InterPro" id="IPR011114">
    <property type="entry name" value="RuvA_C"/>
</dbReference>
<dbReference type="InterPro" id="IPR036267">
    <property type="entry name" value="RuvA_C_sf"/>
</dbReference>
<dbReference type="NCBIfam" id="TIGR00084">
    <property type="entry name" value="ruvA"/>
    <property type="match status" value="1"/>
</dbReference>
<dbReference type="Pfam" id="PF14520">
    <property type="entry name" value="HHH_5"/>
    <property type="match status" value="1"/>
</dbReference>
<dbReference type="Pfam" id="PF07499">
    <property type="entry name" value="RuvA_C"/>
    <property type="match status" value="1"/>
</dbReference>
<dbReference type="Pfam" id="PF01330">
    <property type="entry name" value="RuvA_N"/>
    <property type="match status" value="1"/>
</dbReference>
<dbReference type="SMART" id="SM00278">
    <property type="entry name" value="HhH1"/>
    <property type="match status" value="2"/>
</dbReference>
<dbReference type="SUPFAM" id="SSF46929">
    <property type="entry name" value="DNA helicase RuvA subunit, C-terminal domain"/>
    <property type="match status" value="1"/>
</dbReference>
<dbReference type="SUPFAM" id="SSF50249">
    <property type="entry name" value="Nucleic acid-binding proteins"/>
    <property type="match status" value="1"/>
</dbReference>
<dbReference type="SUPFAM" id="SSF47781">
    <property type="entry name" value="RuvA domain 2-like"/>
    <property type="match status" value="1"/>
</dbReference>
<keyword id="KW-0963">Cytoplasm</keyword>
<keyword id="KW-0227">DNA damage</keyword>
<keyword id="KW-0233">DNA recombination</keyword>
<keyword id="KW-0234">DNA repair</keyword>
<keyword id="KW-0238">DNA-binding</keyword>
<gene>
    <name evidence="1" type="primary">ruvA</name>
    <name type="ordered locus">Paes_0389</name>
</gene>
<feature type="chain" id="PRO_1000090352" description="Holliday junction branch migration complex subunit RuvA">
    <location>
        <begin position="1"/>
        <end position="200"/>
    </location>
</feature>
<feature type="region of interest" description="Domain I" evidence="1">
    <location>
        <begin position="1"/>
        <end position="64"/>
    </location>
</feature>
<feature type="region of interest" description="Domain II" evidence="1">
    <location>
        <begin position="65"/>
        <end position="143"/>
    </location>
</feature>
<feature type="region of interest" description="Flexible linker" evidence="1">
    <location>
        <begin position="144"/>
        <end position="154"/>
    </location>
</feature>
<feature type="region of interest" description="Domain III" evidence="1">
    <location>
        <begin position="154"/>
        <end position="200"/>
    </location>
</feature>
<reference key="1">
    <citation type="submission" date="2008-06" db="EMBL/GenBank/DDBJ databases">
        <title>Complete sequence of chromosome of Prosthecochloris aestuarii DSM 271.</title>
        <authorList>
            <consortium name="US DOE Joint Genome Institute"/>
            <person name="Lucas S."/>
            <person name="Copeland A."/>
            <person name="Lapidus A."/>
            <person name="Glavina del Rio T."/>
            <person name="Dalin E."/>
            <person name="Tice H."/>
            <person name="Bruce D."/>
            <person name="Goodwin L."/>
            <person name="Pitluck S."/>
            <person name="Schmutz J."/>
            <person name="Larimer F."/>
            <person name="Land M."/>
            <person name="Hauser L."/>
            <person name="Kyrpides N."/>
            <person name="Anderson I."/>
            <person name="Liu Z."/>
            <person name="Li T."/>
            <person name="Zhao F."/>
            <person name="Overmann J."/>
            <person name="Bryant D.A."/>
            <person name="Richardson P."/>
        </authorList>
    </citation>
    <scope>NUCLEOTIDE SEQUENCE [LARGE SCALE GENOMIC DNA]</scope>
    <source>
        <strain>DSM 271 / SK 413</strain>
    </source>
</reference>
<proteinExistence type="inferred from homology"/>
<accession>B4S4U8</accession>